<feature type="chain" id="PRO_0000258623" description="Small ribosomal subunit protein eS6">
    <location>
        <begin position="1"/>
        <end position="139"/>
    </location>
</feature>
<dbReference type="EMBL" id="CP000099">
    <property type="protein sequence ID" value="AAZ72256.1"/>
    <property type="molecule type" value="Genomic_DNA"/>
</dbReference>
<dbReference type="SMR" id="Q466D6"/>
<dbReference type="STRING" id="269797.Mbar_A3383"/>
<dbReference type="PaxDb" id="269797-Mbar_A3383"/>
<dbReference type="KEGG" id="mba:Mbar_A3383"/>
<dbReference type="eggNOG" id="arCOG01946">
    <property type="taxonomic scope" value="Archaea"/>
</dbReference>
<dbReference type="HOGENOM" id="CLU_109671_1_1_2"/>
<dbReference type="OrthoDB" id="7793at2157"/>
<dbReference type="GO" id="GO:1990904">
    <property type="term" value="C:ribonucleoprotein complex"/>
    <property type="evidence" value="ECO:0007669"/>
    <property type="project" value="UniProtKB-KW"/>
</dbReference>
<dbReference type="GO" id="GO:0005840">
    <property type="term" value="C:ribosome"/>
    <property type="evidence" value="ECO:0007669"/>
    <property type="project" value="UniProtKB-KW"/>
</dbReference>
<dbReference type="GO" id="GO:0003735">
    <property type="term" value="F:structural constituent of ribosome"/>
    <property type="evidence" value="ECO:0007669"/>
    <property type="project" value="InterPro"/>
</dbReference>
<dbReference type="GO" id="GO:0006412">
    <property type="term" value="P:translation"/>
    <property type="evidence" value="ECO:0007669"/>
    <property type="project" value="UniProtKB-UniRule"/>
</dbReference>
<dbReference type="HAMAP" id="MF_00512">
    <property type="entry name" value="Ribosomal_eS6"/>
    <property type="match status" value="1"/>
</dbReference>
<dbReference type="InterPro" id="IPR001377">
    <property type="entry name" value="Ribosomal_eS6"/>
</dbReference>
<dbReference type="InterPro" id="IPR020924">
    <property type="entry name" value="Ribosomal_eS6_arc"/>
</dbReference>
<dbReference type="InterPro" id="IPR018282">
    <property type="entry name" value="Ribosomal_eS6_CS"/>
</dbReference>
<dbReference type="NCBIfam" id="NF003294">
    <property type="entry name" value="PRK04290.1-3"/>
    <property type="match status" value="1"/>
</dbReference>
<dbReference type="PANTHER" id="PTHR11502">
    <property type="entry name" value="40S RIBOSOMAL PROTEIN S6"/>
    <property type="match status" value="1"/>
</dbReference>
<dbReference type="Pfam" id="PF01092">
    <property type="entry name" value="Ribosomal_S6e"/>
    <property type="match status" value="1"/>
</dbReference>
<dbReference type="SMART" id="SM01405">
    <property type="entry name" value="Ribosomal_S6e"/>
    <property type="match status" value="1"/>
</dbReference>
<dbReference type="PROSITE" id="PS00578">
    <property type="entry name" value="RIBOSOMAL_S6E"/>
    <property type="match status" value="1"/>
</dbReference>
<sequence length="139" mass="14704">MANFKVVVSDPKEGRAYQIDVKDAEANALIGKSIGDVVDGAVFGLSGYKVKITGGCDGSGFVMKPDLLGPRRQRILMAVGVGYTPKHPGQRRRKMVRGKEVAPDIVQINAKVVEYGSKSIKALLGLEAPAEAPAEAPAE</sequence>
<accession>Q466D6</accession>
<protein>
    <recommendedName>
        <fullName evidence="1">Small ribosomal subunit protein eS6</fullName>
    </recommendedName>
    <alternativeName>
        <fullName evidence="2">30S ribosomal protein S6e</fullName>
    </alternativeName>
</protein>
<name>RS6E_METBF</name>
<organism>
    <name type="scientific">Methanosarcina barkeri (strain Fusaro / DSM 804)</name>
    <dbReference type="NCBI Taxonomy" id="269797"/>
    <lineage>
        <taxon>Archaea</taxon>
        <taxon>Methanobacteriati</taxon>
        <taxon>Methanobacteriota</taxon>
        <taxon>Stenosarchaea group</taxon>
        <taxon>Methanomicrobia</taxon>
        <taxon>Methanosarcinales</taxon>
        <taxon>Methanosarcinaceae</taxon>
        <taxon>Methanosarcina</taxon>
    </lineage>
</organism>
<reference key="1">
    <citation type="journal article" date="2006" name="J. Bacteriol.">
        <title>The Methanosarcina barkeri genome: comparative analysis with Methanosarcina acetivorans and Methanosarcina mazei reveals extensive rearrangement within methanosarcinal genomes.</title>
        <authorList>
            <person name="Maeder D.L."/>
            <person name="Anderson I."/>
            <person name="Brettin T.S."/>
            <person name="Bruce D.C."/>
            <person name="Gilna P."/>
            <person name="Han C.S."/>
            <person name="Lapidus A."/>
            <person name="Metcalf W.W."/>
            <person name="Saunders E."/>
            <person name="Tapia R."/>
            <person name="Sowers K.R."/>
        </authorList>
    </citation>
    <scope>NUCLEOTIDE SEQUENCE [LARGE SCALE GENOMIC DNA]</scope>
    <source>
        <strain>Fusaro / DSM 804</strain>
    </source>
</reference>
<evidence type="ECO:0000255" key="1">
    <source>
        <dbReference type="HAMAP-Rule" id="MF_00512"/>
    </source>
</evidence>
<evidence type="ECO:0000305" key="2"/>
<proteinExistence type="inferred from homology"/>
<keyword id="KW-0687">Ribonucleoprotein</keyword>
<keyword id="KW-0689">Ribosomal protein</keyword>
<gene>
    <name evidence="1" type="primary">rps6e</name>
    <name type="ordered locus">Mbar_A3383</name>
</gene>
<comment type="similarity">
    <text evidence="1">Belongs to the eukaryotic ribosomal protein eS6 family.</text>
</comment>